<protein>
    <recommendedName>
        <fullName evidence="1">Small ribosomal subunit protein uS9c</fullName>
    </recommendedName>
    <alternativeName>
        <fullName>30S ribosomal protein S9, plastid</fullName>
    </alternativeName>
</protein>
<sequence>MIFKFFEAIGKRKCSIAKISLFSTVKYNCGVININGKHAYEYLQKNCNPFDFLKIKNYNVCIYVKGGGLIGQAEAIKLAISRALKSFLRKKKIKKLKDFGFLTRNSSCKERRKYGLKKARKAPQYSKR</sequence>
<keyword id="KW-0934">Plastid</keyword>
<keyword id="KW-0687">Ribonucleoprotein</keyword>
<keyword id="KW-0689">Ribosomal protein</keyword>
<gene>
    <name type="primary">rps9</name>
</gene>
<feature type="chain" id="PRO_0000111449" description="Small ribosomal subunit protein uS9c">
    <location>
        <begin position="1"/>
        <end position="128"/>
    </location>
</feature>
<organism>
    <name type="scientific">Euglena longa</name>
    <name type="common">Euglenophycean alga</name>
    <name type="synonym">Astasia longa</name>
    <dbReference type="NCBI Taxonomy" id="3037"/>
    <lineage>
        <taxon>Eukaryota</taxon>
        <taxon>Discoba</taxon>
        <taxon>Euglenozoa</taxon>
        <taxon>Euglenida</taxon>
        <taxon>Spirocuta</taxon>
        <taxon>Euglenophyceae</taxon>
        <taxon>Euglenales</taxon>
        <taxon>Euglenaceae</taxon>
        <taxon>Euglena</taxon>
    </lineage>
</organism>
<dbReference type="EMBL" id="AJ294725">
    <property type="protein sequence ID" value="CAC24583.1"/>
    <property type="molecule type" value="Genomic_DNA"/>
</dbReference>
<dbReference type="RefSeq" id="NP_074972.1">
    <property type="nucleotide sequence ID" value="NC_002652.1"/>
</dbReference>
<dbReference type="SMR" id="P58135"/>
<dbReference type="GeneID" id="802518"/>
<dbReference type="GO" id="GO:0009536">
    <property type="term" value="C:plastid"/>
    <property type="evidence" value="ECO:0007669"/>
    <property type="project" value="UniProtKB-SubCell"/>
</dbReference>
<dbReference type="GO" id="GO:0015935">
    <property type="term" value="C:small ribosomal subunit"/>
    <property type="evidence" value="ECO:0007669"/>
    <property type="project" value="TreeGrafter"/>
</dbReference>
<dbReference type="GO" id="GO:0003723">
    <property type="term" value="F:RNA binding"/>
    <property type="evidence" value="ECO:0007669"/>
    <property type="project" value="TreeGrafter"/>
</dbReference>
<dbReference type="GO" id="GO:0003735">
    <property type="term" value="F:structural constituent of ribosome"/>
    <property type="evidence" value="ECO:0007669"/>
    <property type="project" value="InterPro"/>
</dbReference>
<dbReference type="GO" id="GO:0006412">
    <property type="term" value="P:translation"/>
    <property type="evidence" value="ECO:0007669"/>
    <property type="project" value="InterPro"/>
</dbReference>
<dbReference type="Gene3D" id="3.30.230.10">
    <property type="match status" value="1"/>
</dbReference>
<dbReference type="HAMAP" id="MF_00532_B">
    <property type="entry name" value="Ribosomal_uS9_B"/>
    <property type="match status" value="1"/>
</dbReference>
<dbReference type="InterPro" id="IPR020568">
    <property type="entry name" value="Ribosomal_Su5_D2-typ_SF"/>
</dbReference>
<dbReference type="InterPro" id="IPR000754">
    <property type="entry name" value="Ribosomal_uS9"/>
</dbReference>
<dbReference type="InterPro" id="IPR023035">
    <property type="entry name" value="Ribosomal_uS9_bac/plastid"/>
</dbReference>
<dbReference type="InterPro" id="IPR020574">
    <property type="entry name" value="Ribosomal_uS9_CS"/>
</dbReference>
<dbReference type="InterPro" id="IPR014721">
    <property type="entry name" value="Ribsml_uS5_D2-typ_fold_subgr"/>
</dbReference>
<dbReference type="PANTHER" id="PTHR21569">
    <property type="entry name" value="RIBOSOMAL PROTEIN S9"/>
    <property type="match status" value="1"/>
</dbReference>
<dbReference type="PANTHER" id="PTHR21569:SF1">
    <property type="entry name" value="SMALL RIBOSOMAL SUBUNIT PROTEIN US9M"/>
    <property type="match status" value="1"/>
</dbReference>
<dbReference type="Pfam" id="PF00380">
    <property type="entry name" value="Ribosomal_S9"/>
    <property type="match status" value="1"/>
</dbReference>
<dbReference type="SUPFAM" id="SSF54211">
    <property type="entry name" value="Ribosomal protein S5 domain 2-like"/>
    <property type="match status" value="1"/>
</dbReference>
<dbReference type="PROSITE" id="PS00360">
    <property type="entry name" value="RIBOSOMAL_S9"/>
    <property type="match status" value="1"/>
</dbReference>
<name>RR9_EUGLO</name>
<comment type="subcellular location">
    <subcellularLocation>
        <location>Plastid</location>
    </subcellularLocation>
</comment>
<comment type="similarity">
    <text evidence="1">Belongs to the universal ribosomal protein uS9 family.</text>
</comment>
<accession>P58135</accession>
<geneLocation type="non-photosynthetic plastid"/>
<proteinExistence type="inferred from homology"/>
<reference key="1">
    <citation type="journal article" date="2000" name="Protist">
        <title>Complete gene map of the plastid genome of the nonphotosynthetic euglenoid flagellate Astasia longa.</title>
        <authorList>
            <person name="Gockel G."/>
            <person name="Hachtel W."/>
        </authorList>
    </citation>
    <scope>NUCLEOTIDE SEQUENCE [LARGE SCALE GENOMIC DNA]</scope>
    <source>
        <strain>CCAP 1204-17a</strain>
    </source>
</reference>
<evidence type="ECO:0000305" key="1"/>